<comment type="function">
    <text evidence="1">Catalyzes the 2-thiolation of uridine at the wobble position (U34) of tRNA, leading to the formation of s(2)U34.</text>
</comment>
<comment type="catalytic activity">
    <reaction evidence="1">
        <text>S-sulfanyl-L-cysteinyl-[protein] + uridine(34) in tRNA + AH2 + ATP = 2-thiouridine(34) in tRNA + L-cysteinyl-[protein] + A + AMP + diphosphate + H(+)</text>
        <dbReference type="Rhea" id="RHEA:47032"/>
        <dbReference type="Rhea" id="RHEA-COMP:10131"/>
        <dbReference type="Rhea" id="RHEA-COMP:11726"/>
        <dbReference type="Rhea" id="RHEA-COMP:11727"/>
        <dbReference type="Rhea" id="RHEA-COMP:11728"/>
        <dbReference type="ChEBI" id="CHEBI:13193"/>
        <dbReference type="ChEBI" id="CHEBI:15378"/>
        <dbReference type="ChEBI" id="CHEBI:17499"/>
        <dbReference type="ChEBI" id="CHEBI:29950"/>
        <dbReference type="ChEBI" id="CHEBI:30616"/>
        <dbReference type="ChEBI" id="CHEBI:33019"/>
        <dbReference type="ChEBI" id="CHEBI:61963"/>
        <dbReference type="ChEBI" id="CHEBI:65315"/>
        <dbReference type="ChEBI" id="CHEBI:87170"/>
        <dbReference type="ChEBI" id="CHEBI:456215"/>
        <dbReference type="EC" id="2.8.1.13"/>
    </reaction>
</comment>
<comment type="subcellular location">
    <subcellularLocation>
        <location evidence="1">Cytoplasm</location>
    </subcellularLocation>
</comment>
<comment type="similarity">
    <text evidence="1">Belongs to the MnmA/TRMU family.</text>
</comment>
<dbReference type="EC" id="2.8.1.13" evidence="1"/>
<dbReference type="EMBL" id="CP001389">
    <property type="protein sequence ID" value="ACP26502.1"/>
    <property type="molecule type" value="Genomic_DNA"/>
</dbReference>
<dbReference type="RefSeq" id="WP_012709259.1">
    <property type="nucleotide sequence ID" value="NC_012587.1"/>
</dbReference>
<dbReference type="RefSeq" id="YP_002827255.1">
    <property type="nucleotide sequence ID" value="NC_012587.1"/>
</dbReference>
<dbReference type="SMR" id="C3MI00"/>
<dbReference type="STRING" id="394.NGR_c27540"/>
<dbReference type="KEGG" id="rhi:NGR_c27540"/>
<dbReference type="PATRIC" id="fig|394.7.peg.5584"/>
<dbReference type="eggNOG" id="COG0482">
    <property type="taxonomic scope" value="Bacteria"/>
</dbReference>
<dbReference type="HOGENOM" id="CLU_035188_0_1_5"/>
<dbReference type="OrthoDB" id="9800696at2"/>
<dbReference type="Proteomes" id="UP000001054">
    <property type="component" value="Chromosome"/>
</dbReference>
<dbReference type="GO" id="GO:0005737">
    <property type="term" value="C:cytoplasm"/>
    <property type="evidence" value="ECO:0007669"/>
    <property type="project" value="UniProtKB-SubCell"/>
</dbReference>
<dbReference type="GO" id="GO:0005524">
    <property type="term" value="F:ATP binding"/>
    <property type="evidence" value="ECO:0007669"/>
    <property type="project" value="UniProtKB-KW"/>
</dbReference>
<dbReference type="GO" id="GO:0000049">
    <property type="term" value="F:tRNA binding"/>
    <property type="evidence" value="ECO:0007669"/>
    <property type="project" value="UniProtKB-KW"/>
</dbReference>
<dbReference type="GO" id="GO:0103016">
    <property type="term" value="F:tRNA-uridine 2-sulfurtransferase activity"/>
    <property type="evidence" value="ECO:0007669"/>
    <property type="project" value="UniProtKB-EC"/>
</dbReference>
<dbReference type="GO" id="GO:0002143">
    <property type="term" value="P:tRNA wobble position uridine thiolation"/>
    <property type="evidence" value="ECO:0007669"/>
    <property type="project" value="TreeGrafter"/>
</dbReference>
<dbReference type="CDD" id="cd01998">
    <property type="entry name" value="MnmA_TRMU-like"/>
    <property type="match status" value="1"/>
</dbReference>
<dbReference type="FunFam" id="3.40.50.620:FF:000115">
    <property type="entry name" value="tRNA-specific 2-thiouridylase MnmA"/>
    <property type="match status" value="1"/>
</dbReference>
<dbReference type="Gene3D" id="2.30.30.280">
    <property type="entry name" value="Adenine nucleotide alpha hydrolases-like domains"/>
    <property type="match status" value="1"/>
</dbReference>
<dbReference type="Gene3D" id="3.40.50.620">
    <property type="entry name" value="HUPs"/>
    <property type="match status" value="1"/>
</dbReference>
<dbReference type="Gene3D" id="2.40.30.10">
    <property type="entry name" value="Translation factors"/>
    <property type="match status" value="1"/>
</dbReference>
<dbReference type="HAMAP" id="MF_00144">
    <property type="entry name" value="tRNA_thiouridyl_MnmA"/>
    <property type="match status" value="1"/>
</dbReference>
<dbReference type="InterPro" id="IPR004506">
    <property type="entry name" value="MnmA-like"/>
</dbReference>
<dbReference type="InterPro" id="IPR046885">
    <property type="entry name" value="MnmA-like_C"/>
</dbReference>
<dbReference type="InterPro" id="IPR046884">
    <property type="entry name" value="MnmA-like_central"/>
</dbReference>
<dbReference type="InterPro" id="IPR023382">
    <property type="entry name" value="MnmA-like_central_sf"/>
</dbReference>
<dbReference type="InterPro" id="IPR014729">
    <property type="entry name" value="Rossmann-like_a/b/a_fold"/>
</dbReference>
<dbReference type="NCBIfam" id="NF001138">
    <property type="entry name" value="PRK00143.1"/>
    <property type="match status" value="1"/>
</dbReference>
<dbReference type="NCBIfam" id="TIGR00420">
    <property type="entry name" value="trmU"/>
    <property type="match status" value="1"/>
</dbReference>
<dbReference type="PANTHER" id="PTHR11933:SF5">
    <property type="entry name" value="MITOCHONDRIAL TRNA-SPECIFIC 2-THIOURIDYLASE 1"/>
    <property type="match status" value="1"/>
</dbReference>
<dbReference type="PANTHER" id="PTHR11933">
    <property type="entry name" value="TRNA 5-METHYLAMINOMETHYL-2-THIOURIDYLATE -METHYLTRANSFERASE"/>
    <property type="match status" value="1"/>
</dbReference>
<dbReference type="Pfam" id="PF03054">
    <property type="entry name" value="tRNA_Me_trans"/>
    <property type="match status" value="1"/>
</dbReference>
<dbReference type="Pfam" id="PF20258">
    <property type="entry name" value="tRNA_Me_trans_C"/>
    <property type="match status" value="1"/>
</dbReference>
<dbReference type="Pfam" id="PF20259">
    <property type="entry name" value="tRNA_Me_trans_M"/>
    <property type="match status" value="1"/>
</dbReference>
<dbReference type="SUPFAM" id="SSF52402">
    <property type="entry name" value="Adenine nucleotide alpha hydrolases-like"/>
    <property type="match status" value="1"/>
</dbReference>
<accession>C3MI00</accession>
<feature type="chain" id="PRO_1000198622" description="tRNA-specific 2-thiouridylase MnmA">
    <location>
        <begin position="1"/>
        <end position="398"/>
    </location>
</feature>
<feature type="region of interest" description="Interaction with tRNA" evidence="1">
    <location>
        <begin position="163"/>
        <end position="165"/>
    </location>
</feature>
<feature type="active site" description="Nucleophile" evidence="1">
    <location>
        <position position="112"/>
    </location>
</feature>
<feature type="active site" description="Cysteine persulfide intermediate" evidence="1">
    <location>
        <position position="213"/>
    </location>
</feature>
<feature type="binding site" evidence="1">
    <location>
        <begin position="18"/>
        <end position="25"/>
    </location>
    <ligand>
        <name>ATP</name>
        <dbReference type="ChEBI" id="CHEBI:30616"/>
    </ligand>
</feature>
<feature type="binding site" evidence="1">
    <location>
        <position position="44"/>
    </location>
    <ligand>
        <name>ATP</name>
        <dbReference type="ChEBI" id="CHEBI:30616"/>
    </ligand>
</feature>
<feature type="binding site" evidence="1">
    <location>
        <position position="136"/>
    </location>
    <ligand>
        <name>ATP</name>
        <dbReference type="ChEBI" id="CHEBI:30616"/>
    </ligand>
</feature>
<feature type="site" description="Interaction with tRNA" evidence="1">
    <location>
        <position position="137"/>
    </location>
</feature>
<feature type="site" description="Interaction with tRNA" evidence="1">
    <location>
        <position position="355"/>
    </location>
</feature>
<feature type="disulfide bond" description="Alternate" evidence="1">
    <location>
        <begin position="112"/>
        <end position="213"/>
    </location>
</feature>
<gene>
    <name evidence="1" type="primary">mnmA</name>
    <name type="ordered locus">NGR_c27540</name>
</gene>
<protein>
    <recommendedName>
        <fullName evidence="1">tRNA-specific 2-thiouridylase MnmA</fullName>
        <ecNumber evidence="1">2.8.1.13</ecNumber>
    </recommendedName>
</protein>
<sequence length="398" mass="43161">MNSLDFDRKPEDTRVVVAMSGGVDSSVVAGLLKREGYDVLGITLQLYDHGAAVHRAGSCCAGQDIDDARRVCETLGIPHYVLDYEARFRETVINPFAESYIAGETPIPCVACNQTVKFADLLATAKELGADALATGHYIRSRPSPKPRYQGQRALYRPTDAERDQSYFLFATTQEQIDYLRFPLGNLSKPETRALAEEMGLVVAKKADSQDICFVPQGKYSDIVSKLKPNAALGGEIVHLDGRVLGTHEGILHYTIGQRRGIGVATGEPLYVVYLDARSRRVIVGPKEALETRRVYLRDVNWLGDEEIDAAASRGFACFAKVRSTRQPAPAEMKCDADGIYVELVDGEAGVAPGQACALYSGTGEDARVYGGGFIRKSEREPAAEAALQALLQAPAAA</sequence>
<evidence type="ECO:0000255" key="1">
    <source>
        <dbReference type="HAMAP-Rule" id="MF_00144"/>
    </source>
</evidence>
<keyword id="KW-0067">ATP-binding</keyword>
<keyword id="KW-0963">Cytoplasm</keyword>
<keyword id="KW-1015">Disulfide bond</keyword>
<keyword id="KW-0547">Nucleotide-binding</keyword>
<keyword id="KW-1185">Reference proteome</keyword>
<keyword id="KW-0694">RNA-binding</keyword>
<keyword id="KW-0808">Transferase</keyword>
<keyword id="KW-0819">tRNA processing</keyword>
<keyword id="KW-0820">tRNA-binding</keyword>
<name>MNMA_SINFN</name>
<proteinExistence type="inferred from homology"/>
<reference key="1">
    <citation type="journal article" date="2009" name="Appl. Environ. Microbiol.">
        <title>Rhizobium sp. strain NGR234 possesses a remarkable number of secretion systems.</title>
        <authorList>
            <person name="Schmeisser C."/>
            <person name="Liesegang H."/>
            <person name="Krysciak D."/>
            <person name="Bakkou N."/>
            <person name="Le Quere A."/>
            <person name="Wollherr A."/>
            <person name="Heinemeyer I."/>
            <person name="Morgenstern B."/>
            <person name="Pommerening-Roeser A."/>
            <person name="Flores M."/>
            <person name="Palacios R."/>
            <person name="Brenner S."/>
            <person name="Gottschalk G."/>
            <person name="Schmitz R.A."/>
            <person name="Broughton W.J."/>
            <person name="Perret X."/>
            <person name="Strittmatter A.W."/>
            <person name="Streit W.R."/>
        </authorList>
    </citation>
    <scope>NUCLEOTIDE SEQUENCE [LARGE SCALE GENOMIC DNA]</scope>
    <source>
        <strain>NBRC 101917 / NGR234</strain>
    </source>
</reference>
<organism>
    <name type="scientific">Sinorhizobium fredii (strain NBRC 101917 / NGR234)</name>
    <dbReference type="NCBI Taxonomy" id="394"/>
    <lineage>
        <taxon>Bacteria</taxon>
        <taxon>Pseudomonadati</taxon>
        <taxon>Pseudomonadota</taxon>
        <taxon>Alphaproteobacteria</taxon>
        <taxon>Hyphomicrobiales</taxon>
        <taxon>Rhizobiaceae</taxon>
        <taxon>Sinorhizobium/Ensifer group</taxon>
        <taxon>Sinorhizobium</taxon>
    </lineage>
</organism>